<proteinExistence type="inferred from homology"/>
<gene>
    <name type="primary">amiC</name>
    <name type="ordered locus">BQ2027_MB2912C</name>
</gene>
<organism>
    <name type="scientific">Mycobacterium bovis (strain ATCC BAA-935 / AF2122/97)</name>
    <dbReference type="NCBI Taxonomy" id="233413"/>
    <lineage>
        <taxon>Bacteria</taxon>
        <taxon>Bacillati</taxon>
        <taxon>Actinomycetota</taxon>
        <taxon>Actinomycetes</taxon>
        <taxon>Mycobacteriales</taxon>
        <taxon>Mycobacteriaceae</taxon>
        <taxon>Mycobacterium</taxon>
        <taxon>Mycobacterium tuberculosis complex</taxon>
    </lineage>
</organism>
<dbReference type="EC" id="3.5.1.4"/>
<dbReference type="EMBL" id="LT708304">
    <property type="protein sequence ID" value="SIU01533.1"/>
    <property type="molecule type" value="Genomic_DNA"/>
</dbReference>
<dbReference type="RefSeq" id="NP_856557.1">
    <property type="nucleotide sequence ID" value="NC_002945.3"/>
</dbReference>
<dbReference type="RefSeq" id="WP_003414672.1">
    <property type="nucleotide sequence ID" value="NC_002945.4"/>
</dbReference>
<dbReference type="SMR" id="P63495"/>
<dbReference type="KEGG" id="mbo:BQ2027_MB2912C"/>
<dbReference type="PATRIC" id="fig|233413.5.peg.3196"/>
<dbReference type="Proteomes" id="UP000001419">
    <property type="component" value="Chromosome"/>
</dbReference>
<dbReference type="GO" id="GO:0004040">
    <property type="term" value="F:amidase activity"/>
    <property type="evidence" value="ECO:0007669"/>
    <property type="project" value="UniProtKB-EC"/>
</dbReference>
<dbReference type="FunFam" id="3.90.1300.10:FF:000008">
    <property type="entry name" value="Amidase AmiC"/>
    <property type="match status" value="1"/>
</dbReference>
<dbReference type="Gene3D" id="3.90.1300.10">
    <property type="entry name" value="Amidase signature (AS) domain"/>
    <property type="match status" value="1"/>
</dbReference>
<dbReference type="InterPro" id="IPR000120">
    <property type="entry name" value="Amidase"/>
</dbReference>
<dbReference type="InterPro" id="IPR020556">
    <property type="entry name" value="Amidase_CS"/>
</dbReference>
<dbReference type="InterPro" id="IPR023631">
    <property type="entry name" value="Amidase_dom"/>
</dbReference>
<dbReference type="InterPro" id="IPR036928">
    <property type="entry name" value="AS_sf"/>
</dbReference>
<dbReference type="NCBIfam" id="NF005899">
    <property type="entry name" value="PRK07869.1"/>
    <property type="match status" value="1"/>
</dbReference>
<dbReference type="PANTHER" id="PTHR11895:SF7">
    <property type="entry name" value="GLUTAMYL-TRNA(GLN) AMIDOTRANSFERASE SUBUNIT A, MITOCHONDRIAL"/>
    <property type="match status" value="1"/>
</dbReference>
<dbReference type="PANTHER" id="PTHR11895">
    <property type="entry name" value="TRANSAMIDASE"/>
    <property type="match status" value="1"/>
</dbReference>
<dbReference type="Pfam" id="PF01425">
    <property type="entry name" value="Amidase"/>
    <property type="match status" value="1"/>
</dbReference>
<dbReference type="SUPFAM" id="SSF75304">
    <property type="entry name" value="Amidase signature (AS) enzymes"/>
    <property type="match status" value="1"/>
</dbReference>
<dbReference type="PROSITE" id="PS00571">
    <property type="entry name" value="AMIDASES"/>
    <property type="match status" value="1"/>
</dbReference>
<name>AMI3_MYCBO</name>
<evidence type="ECO:0000250" key="1"/>
<evidence type="ECO:0000305" key="2"/>
<accession>P63495</accession>
<accession>A0A1R3Y2I3</accession>
<accession>Q10811</accession>
<accession>X2BLX1</accession>
<protein>
    <recommendedName>
        <fullName>Putative amidase AmiC</fullName>
        <ecNumber>3.5.1.4</ecNumber>
    </recommendedName>
</protein>
<keyword id="KW-0378">Hydrolase</keyword>
<keyword id="KW-1185">Reference proteome</keyword>
<comment type="catalytic activity">
    <reaction>
        <text>a monocarboxylic acid amide + H2O = a monocarboxylate + NH4(+)</text>
        <dbReference type="Rhea" id="RHEA:12020"/>
        <dbReference type="ChEBI" id="CHEBI:15377"/>
        <dbReference type="ChEBI" id="CHEBI:28938"/>
        <dbReference type="ChEBI" id="CHEBI:35757"/>
        <dbReference type="ChEBI" id="CHEBI:83628"/>
        <dbReference type="EC" id="3.5.1.4"/>
    </reaction>
</comment>
<comment type="similarity">
    <text evidence="2">Belongs to the amidase family.</text>
</comment>
<sequence>MSRVHAFVDDALGDLDAVALADAIRSGRVGRADVVEAAIARAEAVNPALNALAYAAFDVARDAAAMGTGQEAFFSGVPTFIKDNVDVAGQPSMHGTDAWEPYAAVADSEITRVVLGTGLVSLGKTQLSEFGFSAVAEHPRLGPVRNPWNTDYTAGASSSGSGALVAAGVVPIAHANDGGGSIRIPAACNGLVGLKPSRGRLPLEPEYRRLPVGIVANGVLTRTVRDTAAFYREAERLWRNHQLPPVGDVTSPVKQRLRIAVVTRSVLREASPEVRQLTLKLAGLLEELGHRVEHVDHPPAPASFVDDFVLYWGFLALAQVRSGRRTFGRTFDPTRLDELTLGLARHTGRNLHRLPLAIMRLRMLRRRSVRFFGTYDVLLTPTVAEATPQVGYLAPTDYQTVLDRLSSWVVFTPVQNVTGVPAISLPLAQSADGMPVGMMLSADTGREALLLELAYELEEARPWARIHAPNIAE</sequence>
<reference key="1">
    <citation type="journal article" date="2003" name="Proc. Natl. Acad. Sci. U.S.A.">
        <title>The complete genome sequence of Mycobacterium bovis.</title>
        <authorList>
            <person name="Garnier T."/>
            <person name="Eiglmeier K."/>
            <person name="Camus J.-C."/>
            <person name="Medina N."/>
            <person name="Mansoor H."/>
            <person name="Pryor M."/>
            <person name="Duthoy S."/>
            <person name="Grondin S."/>
            <person name="Lacroix C."/>
            <person name="Monsempe C."/>
            <person name="Simon S."/>
            <person name="Harris B."/>
            <person name="Atkin R."/>
            <person name="Doggett J."/>
            <person name="Mayes R."/>
            <person name="Keating L."/>
            <person name="Wheeler P.R."/>
            <person name="Parkhill J."/>
            <person name="Barrell B.G."/>
            <person name="Cole S.T."/>
            <person name="Gordon S.V."/>
            <person name="Hewinson R.G."/>
        </authorList>
    </citation>
    <scope>NUCLEOTIDE SEQUENCE [LARGE SCALE GENOMIC DNA]</scope>
    <source>
        <strain>ATCC BAA-935 / AF2122/97</strain>
    </source>
</reference>
<reference key="2">
    <citation type="journal article" date="2017" name="Genome Announc.">
        <title>Updated reference genome sequence and annotation of Mycobacterium bovis AF2122/97.</title>
        <authorList>
            <person name="Malone K.M."/>
            <person name="Farrell D."/>
            <person name="Stuber T.P."/>
            <person name="Schubert O.T."/>
            <person name="Aebersold R."/>
            <person name="Robbe-Austerman S."/>
            <person name="Gordon S.V."/>
        </authorList>
    </citation>
    <scope>NUCLEOTIDE SEQUENCE [LARGE SCALE GENOMIC DNA]</scope>
    <scope>GENOME REANNOTATION</scope>
    <source>
        <strain>ATCC BAA-935 / AF2122/97</strain>
    </source>
</reference>
<feature type="chain" id="PRO_0000105259" description="Putative amidase AmiC">
    <location>
        <begin position="1"/>
        <end position="473"/>
    </location>
</feature>
<feature type="active site" description="Charge relay system" evidence="1">
    <location>
        <position position="82"/>
    </location>
</feature>
<feature type="active site" description="Charge relay system" evidence="1">
    <location>
        <position position="157"/>
    </location>
</feature>
<feature type="active site" description="Acyl-ester intermediate" evidence="1">
    <location>
        <position position="181"/>
    </location>
</feature>